<gene>
    <name evidence="1" type="primary">pfkA</name>
    <name type="ordered locus">SPN23F08180</name>
</gene>
<comment type="function">
    <text evidence="1">Catalyzes the phosphorylation of D-fructose 6-phosphate to fructose 1,6-bisphosphate by ATP, the first committing step of glycolysis.</text>
</comment>
<comment type="catalytic activity">
    <reaction evidence="1">
        <text>beta-D-fructose 6-phosphate + ATP = beta-D-fructose 1,6-bisphosphate + ADP + H(+)</text>
        <dbReference type="Rhea" id="RHEA:16109"/>
        <dbReference type="ChEBI" id="CHEBI:15378"/>
        <dbReference type="ChEBI" id="CHEBI:30616"/>
        <dbReference type="ChEBI" id="CHEBI:32966"/>
        <dbReference type="ChEBI" id="CHEBI:57634"/>
        <dbReference type="ChEBI" id="CHEBI:456216"/>
        <dbReference type="EC" id="2.7.1.11"/>
    </reaction>
</comment>
<comment type="cofactor">
    <cofactor evidence="1">
        <name>Mg(2+)</name>
        <dbReference type="ChEBI" id="CHEBI:18420"/>
    </cofactor>
</comment>
<comment type="activity regulation">
    <text evidence="1">Allosterically activated by ADP and other diphosphonucleosides, and allosterically inhibited by phosphoenolpyruvate.</text>
</comment>
<comment type="pathway">
    <text evidence="1">Carbohydrate degradation; glycolysis; D-glyceraldehyde 3-phosphate and glycerone phosphate from D-glucose: step 3/4.</text>
</comment>
<comment type="subunit">
    <text evidence="1">Homotetramer.</text>
</comment>
<comment type="subcellular location">
    <subcellularLocation>
        <location evidence="1">Cytoplasm</location>
    </subcellularLocation>
</comment>
<comment type="similarity">
    <text evidence="1">Belongs to the phosphofructokinase type A (PFKA) family. ATP-dependent PFK group I subfamily. Prokaryotic clade 'B1' sub-subfamily.</text>
</comment>
<proteinExistence type="inferred from homology"/>
<name>PFKA_STRPJ</name>
<reference key="1">
    <citation type="journal article" date="2009" name="J. Bacteriol.">
        <title>Role of conjugative elements in the evolution of the multidrug-resistant pandemic clone Streptococcus pneumoniae Spain23F ST81.</title>
        <authorList>
            <person name="Croucher N.J."/>
            <person name="Walker D."/>
            <person name="Romero P."/>
            <person name="Lennard N."/>
            <person name="Paterson G.K."/>
            <person name="Bason N.C."/>
            <person name="Mitchell A.M."/>
            <person name="Quail M.A."/>
            <person name="Andrew P.W."/>
            <person name="Parkhill J."/>
            <person name="Bentley S.D."/>
            <person name="Mitchell T.J."/>
        </authorList>
    </citation>
    <scope>NUCLEOTIDE SEQUENCE [LARGE SCALE GENOMIC DNA]</scope>
    <source>
        <strain>ATCC 700669 / Spain 23F-1</strain>
    </source>
</reference>
<accession>B8ZNU0</accession>
<keyword id="KW-0021">Allosteric enzyme</keyword>
<keyword id="KW-0067">ATP-binding</keyword>
<keyword id="KW-0963">Cytoplasm</keyword>
<keyword id="KW-0324">Glycolysis</keyword>
<keyword id="KW-0418">Kinase</keyword>
<keyword id="KW-0460">Magnesium</keyword>
<keyword id="KW-0479">Metal-binding</keyword>
<keyword id="KW-0547">Nucleotide-binding</keyword>
<keyword id="KW-0808">Transferase</keyword>
<organism>
    <name type="scientific">Streptococcus pneumoniae (strain ATCC 700669 / Spain 23F-1)</name>
    <dbReference type="NCBI Taxonomy" id="561276"/>
    <lineage>
        <taxon>Bacteria</taxon>
        <taxon>Bacillati</taxon>
        <taxon>Bacillota</taxon>
        <taxon>Bacilli</taxon>
        <taxon>Lactobacillales</taxon>
        <taxon>Streptococcaceae</taxon>
        <taxon>Streptococcus</taxon>
    </lineage>
</organism>
<feature type="chain" id="PRO_1000192382" description="ATP-dependent 6-phosphofructokinase">
    <location>
        <begin position="1"/>
        <end position="335"/>
    </location>
</feature>
<feature type="active site" description="Proton acceptor" evidence="1">
    <location>
        <position position="127"/>
    </location>
</feature>
<feature type="binding site" evidence="1">
    <location>
        <position position="11"/>
    </location>
    <ligand>
        <name>ATP</name>
        <dbReference type="ChEBI" id="CHEBI:30616"/>
    </ligand>
</feature>
<feature type="binding site" evidence="1">
    <location>
        <begin position="21"/>
        <end position="25"/>
    </location>
    <ligand>
        <name>ADP</name>
        <dbReference type="ChEBI" id="CHEBI:456216"/>
        <note>allosteric activator; ligand shared between dimeric partners</note>
    </ligand>
</feature>
<feature type="binding site" evidence="1">
    <location>
        <begin position="72"/>
        <end position="73"/>
    </location>
    <ligand>
        <name>ATP</name>
        <dbReference type="ChEBI" id="CHEBI:30616"/>
    </ligand>
</feature>
<feature type="binding site" evidence="1">
    <location>
        <begin position="102"/>
        <end position="105"/>
    </location>
    <ligand>
        <name>ATP</name>
        <dbReference type="ChEBI" id="CHEBI:30616"/>
    </ligand>
</feature>
<feature type="binding site" evidence="1">
    <location>
        <position position="103"/>
    </location>
    <ligand>
        <name>Mg(2+)</name>
        <dbReference type="ChEBI" id="CHEBI:18420"/>
        <note>catalytic</note>
    </ligand>
</feature>
<feature type="binding site" description="in other chain" evidence="1">
    <location>
        <begin position="125"/>
        <end position="127"/>
    </location>
    <ligand>
        <name>substrate</name>
        <note>ligand shared between dimeric partners</note>
    </ligand>
</feature>
<feature type="binding site" description="in other chain" evidence="1">
    <location>
        <position position="154"/>
    </location>
    <ligand>
        <name>ADP</name>
        <dbReference type="ChEBI" id="CHEBI:456216"/>
        <note>allosteric activator; ligand shared between dimeric partners</note>
    </ligand>
</feature>
<feature type="binding site" evidence="1">
    <location>
        <position position="162"/>
    </location>
    <ligand>
        <name>substrate</name>
        <note>ligand shared between dimeric partners</note>
    </ligand>
</feature>
<feature type="binding site" description="in other chain" evidence="1">
    <location>
        <begin position="169"/>
        <end position="171"/>
    </location>
    <ligand>
        <name>substrate</name>
        <note>ligand shared between dimeric partners</note>
    </ligand>
</feature>
<feature type="binding site" description="in other chain" evidence="1">
    <location>
        <begin position="185"/>
        <end position="187"/>
    </location>
    <ligand>
        <name>ADP</name>
        <dbReference type="ChEBI" id="CHEBI:456216"/>
        <note>allosteric activator; ligand shared between dimeric partners</note>
    </ligand>
</feature>
<feature type="binding site" description="in other chain" evidence="1">
    <location>
        <begin position="213"/>
        <end position="215"/>
    </location>
    <ligand>
        <name>ADP</name>
        <dbReference type="ChEBI" id="CHEBI:456216"/>
        <note>allosteric activator; ligand shared between dimeric partners</note>
    </ligand>
</feature>
<feature type="binding site" description="in other chain" evidence="1">
    <location>
        <position position="222"/>
    </location>
    <ligand>
        <name>substrate</name>
        <note>ligand shared between dimeric partners</note>
    </ligand>
</feature>
<feature type="binding site" evidence="1">
    <location>
        <position position="244"/>
    </location>
    <ligand>
        <name>substrate</name>
        <note>ligand shared between dimeric partners</note>
    </ligand>
</feature>
<feature type="binding site" description="in other chain" evidence="1">
    <location>
        <begin position="250"/>
        <end position="253"/>
    </location>
    <ligand>
        <name>substrate</name>
        <note>ligand shared between dimeric partners</note>
    </ligand>
</feature>
<dbReference type="EC" id="2.7.1.11" evidence="1"/>
<dbReference type="EMBL" id="FM211187">
    <property type="protein sequence ID" value="CAR68652.1"/>
    <property type="molecule type" value="Genomic_DNA"/>
</dbReference>
<dbReference type="RefSeq" id="WP_000820852.1">
    <property type="nucleotide sequence ID" value="NC_011900.1"/>
</dbReference>
<dbReference type="SMR" id="B8ZNU0"/>
<dbReference type="GeneID" id="45653754"/>
<dbReference type="KEGG" id="sne:SPN23F08180"/>
<dbReference type="HOGENOM" id="CLU_020655_0_1_9"/>
<dbReference type="UniPathway" id="UPA00109">
    <property type="reaction ID" value="UER00182"/>
</dbReference>
<dbReference type="GO" id="GO:0005945">
    <property type="term" value="C:6-phosphofructokinase complex"/>
    <property type="evidence" value="ECO:0007669"/>
    <property type="project" value="TreeGrafter"/>
</dbReference>
<dbReference type="GO" id="GO:0003872">
    <property type="term" value="F:6-phosphofructokinase activity"/>
    <property type="evidence" value="ECO:0007669"/>
    <property type="project" value="UniProtKB-UniRule"/>
</dbReference>
<dbReference type="GO" id="GO:0016208">
    <property type="term" value="F:AMP binding"/>
    <property type="evidence" value="ECO:0007669"/>
    <property type="project" value="TreeGrafter"/>
</dbReference>
<dbReference type="GO" id="GO:0005524">
    <property type="term" value="F:ATP binding"/>
    <property type="evidence" value="ECO:0007669"/>
    <property type="project" value="UniProtKB-KW"/>
</dbReference>
<dbReference type="GO" id="GO:0070095">
    <property type="term" value="F:fructose-6-phosphate binding"/>
    <property type="evidence" value="ECO:0007669"/>
    <property type="project" value="TreeGrafter"/>
</dbReference>
<dbReference type="GO" id="GO:0042802">
    <property type="term" value="F:identical protein binding"/>
    <property type="evidence" value="ECO:0007669"/>
    <property type="project" value="TreeGrafter"/>
</dbReference>
<dbReference type="GO" id="GO:0046872">
    <property type="term" value="F:metal ion binding"/>
    <property type="evidence" value="ECO:0007669"/>
    <property type="project" value="UniProtKB-KW"/>
</dbReference>
<dbReference type="GO" id="GO:0048029">
    <property type="term" value="F:monosaccharide binding"/>
    <property type="evidence" value="ECO:0007669"/>
    <property type="project" value="TreeGrafter"/>
</dbReference>
<dbReference type="GO" id="GO:0061621">
    <property type="term" value="P:canonical glycolysis"/>
    <property type="evidence" value="ECO:0007669"/>
    <property type="project" value="TreeGrafter"/>
</dbReference>
<dbReference type="GO" id="GO:0030388">
    <property type="term" value="P:fructose 1,6-bisphosphate metabolic process"/>
    <property type="evidence" value="ECO:0007669"/>
    <property type="project" value="TreeGrafter"/>
</dbReference>
<dbReference type="GO" id="GO:0006002">
    <property type="term" value="P:fructose 6-phosphate metabolic process"/>
    <property type="evidence" value="ECO:0007669"/>
    <property type="project" value="InterPro"/>
</dbReference>
<dbReference type="CDD" id="cd00763">
    <property type="entry name" value="Bacterial_PFK"/>
    <property type="match status" value="1"/>
</dbReference>
<dbReference type="FunFam" id="3.40.50.450:FF:000001">
    <property type="entry name" value="ATP-dependent 6-phosphofructokinase"/>
    <property type="match status" value="1"/>
</dbReference>
<dbReference type="FunFam" id="3.40.50.460:FF:000002">
    <property type="entry name" value="ATP-dependent 6-phosphofructokinase"/>
    <property type="match status" value="1"/>
</dbReference>
<dbReference type="Gene3D" id="3.40.50.450">
    <property type="match status" value="1"/>
</dbReference>
<dbReference type="Gene3D" id="3.40.50.460">
    <property type="entry name" value="Phosphofructokinase domain"/>
    <property type="match status" value="1"/>
</dbReference>
<dbReference type="HAMAP" id="MF_00339">
    <property type="entry name" value="Phosphofructokinase_I_B1"/>
    <property type="match status" value="1"/>
</dbReference>
<dbReference type="InterPro" id="IPR022953">
    <property type="entry name" value="ATP_PFK"/>
</dbReference>
<dbReference type="InterPro" id="IPR012003">
    <property type="entry name" value="ATP_PFK_prok-type"/>
</dbReference>
<dbReference type="InterPro" id="IPR012828">
    <property type="entry name" value="PFKA_ATP_prok"/>
</dbReference>
<dbReference type="InterPro" id="IPR015912">
    <property type="entry name" value="Phosphofructokinase_CS"/>
</dbReference>
<dbReference type="InterPro" id="IPR000023">
    <property type="entry name" value="Phosphofructokinase_dom"/>
</dbReference>
<dbReference type="InterPro" id="IPR035966">
    <property type="entry name" value="PKF_sf"/>
</dbReference>
<dbReference type="NCBIfam" id="TIGR02482">
    <property type="entry name" value="PFKA_ATP"/>
    <property type="match status" value="1"/>
</dbReference>
<dbReference type="NCBIfam" id="NF002872">
    <property type="entry name" value="PRK03202.1"/>
    <property type="match status" value="1"/>
</dbReference>
<dbReference type="PANTHER" id="PTHR13697:SF4">
    <property type="entry name" value="ATP-DEPENDENT 6-PHOSPHOFRUCTOKINASE"/>
    <property type="match status" value="1"/>
</dbReference>
<dbReference type="PANTHER" id="PTHR13697">
    <property type="entry name" value="PHOSPHOFRUCTOKINASE"/>
    <property type="match status" value="1"/>
</dbReference>
<dbReference type="Pfam" id="PF00365">
    <property type="entry name" value="PFK"/>
    <property type="match status" value="1"/>
</dbReference>
<dbReference type="PIRSF" id="PIRSF000532">
    <property type="entry name" value="ATP_PFK_prok"/>
    <property type="match status" value="1"/>
</dbReference>
<dbReference type="PRINTS" id="PR00476">
    <property type="entry name" value="PHFRCTKINASE"/>
</dbReference>
<dbReference type="SUPFAM" id="SSF53784">
    <property type="entry name" value="Phosphofructokinase"/>
    <property type="match status" value="1"/>
</dbReference>
<dbReference type="PROSITE" id="PS00433">
    <property type="entry name" value="PHOSPHOFRUCTOKINASE"/>
    <property type="match status" value="1"/>
</dbReference>
<protein>
    <recommendedName>
        <fullName evidence="1">ATP-dependent 6-phosphofructokinase</fullName>
        <shortName evidence="1">ATP-PFK</shortName>
        <shortName evidence="1">Phosphofructokinase</shortName>
        <ecNumber evidence="1">2.7.1.11</ecNumber>
    </recommendedName>
    <alternativeName>
        <fullName evidence="1">Phosphohexokinase</fullName>
    </alternativeName>
</protein>
<sequence>MKRIAVLTSGGDAPGMNAAIRAVVRQAISEGMEVFGIYDGYAGMVAGEIHPLDAASVGDIISRGGTFLHSARYPEFAQLEGQLKGIEQLKKHGIEGVVVIGGDGSYHGAMRLTEHGFPAIGLPGTIDNDIVGTDFTIGFDTAVTTAMDAIDKIRDTSSSHRRTFVIEVMGRNAGDIALWAGIATGADEIIIPEAGFKMEDIVASIKAGYECGKKHNIIVLAEGVMSAAEFGQKLKEAGDTSDLRVTELGHIQRGGSPTARDRVLASRMGAHAVKLLKEGIGGVAVGIRNEKMVENPILGTAEEGALFSLTAEGKIVVNNPHKADIELSSLNKSLS</sequence>
<evidence type="ECO:0000255" key="1">
    <source>
        <dbReference type="HAMAP-Rule" id="MF_00339"/>
    </source>
</evidence>